<reference key="1">
    <citation type="submission" date="1995-11" db="EMBL/GenBank/DDBJ databases">
        <authorList>
            <person name="Min B."/>
            <person name="Sommer H."/>
            <person name="Forkmann G."/>
        </authorList>
    </citation>
    <scope>NUCLEOTIDE SEQUENCE [MRNA]</scope>
    <source>
        <strain>L 01</strain>
        <tissue>Petal</tissue>
    </source>
</reference>
<protein>
    <recommendedName>
        <fullName>Dihydroflavonol 4-reductase</fullName>
        <shortName>DFR</shortName>
        <ecNumber evidence="2">1.1.1.219</ecNumber>
    </recommendedName>
    <alternativeName>
        <fullName>Dihydrokaempferol 4-reductase</fullName>
    </alternativeName>
    <alternativeName>
        <fullName>Flavanone 4-reductase</fullName>
        <shortName>FNR</shortName>
        <ecNumber evidence="2">1.1.1.234</ecNumber>
    </alternativeName>
</protein>
<comment type="function">
    <text evidence="2">Bifunctional enzyme involved in flavonoid metabolism.</text>
</comment>
<comment type="catalytic activity">
    <reaction evidence="2">
        <text>a (2R,3S,4S)-leucoanthocyanidin + NADP(+) = a (2R,3R)-dihydroflavonol + NADPH + H(+)</text>
        <dbReference type="Rhea" id="RHEA:54444"/>
        <dbReference type="ChEBI" id="CHEBI:15378"/>
        <dbReference type="ChEBI" id="CHEBI:57783"/>
        <dbReference type="ChEBI" id="CHEBI:58349"/>
        <dbReference type="ChEBI" id="CHEBI:138176"/>
        <dbReference type="ChEBI" id="CHEBI:138188"/>
        <dbReference type="EC" id="1.1.1.219"/>
    </reaction>
</comment>
<comment type="catalytic activity">
    <reaction evidence="2">
        <text>(2S)-flavan-4-ol + NADP(+) = (2S)-flavanone + NADPH + H(+)</text>
        <dbReference type="Rhea" id="RHEA:11228"/>
        <dbReference type="ChEBI" id="CHEBI:15378"/>
        <dbReference type="ChEBI" id="CHEBI:15605"/>
        <dbReference type="ChEBI" id="CHEBI:15606"/>
        <dbReference type="ChEBI" id="CHEBI:57783"/>
        <dbReference type="ChEBI" id="CHEBI:58349"/>
        <dbReference type="EC" id="1.1.1.234"/>
    </reaction>
</comment>
<comment type="pathway">
    <text>Pigment biosynthesis; anthocyanin biosynthesis.</text>
</comment>
<comment type="similarity">
    <text evidence="3">Belongs to the NAD(P)-dependent epimerase/dehydratase family. Dihydroflavonol-4-reductase subfamily.</text>
</comment>
<dbReference type="EC" id="1.1.1.219" evidence="2"/>
<dbReference type="EC" id="1.1.1.234" evidence="2"/>
<dbReference type="EMBL" id="Z67981">
    <property type="protein sequence ID" value="CAA91922.1"/>
    <property type="molecule type" value="mRNA"/>
</dbReference>
<dbReference type="SMR" id="P51103"/>
<dbReference type="BRENDA" id="1.1.1.219">
    <property type="organism ID" value="1066"/>
</dbReference>
<dbReference type="UniPathway" id="UPA00009"/>
<dbReference type="GO" id="GO:0045552">
    <property type="term" value="F:dihydrokaempferol 4-reductase activity"/>
    <property type="evidence" value="ECO:0007669"/>
    <property type="project" value="UniProtKB-EC"/>
</dbReference>
<dbReference type="GO" id="GO:0047890">
    <property type="term" value="F:flavanone 4-reductase activity"/>
    <property type="evidence" value="ECO:0007669"/>
    <property type="project" value="UniProtKB-EC"/>
</dbReference>
<dbReference type="GO" id="GO:0009718">
    <property type="term" value="P:anthocyanin-containing compound biosynthetic process"/>
    <property type="evidence" value="ECO:0007669"/>
    <property type="project" value="UniProtKB-UniPathway"/>
</dbReference>
<dbReference type="CDD" id="cd08958">
    <property type="entry name" value="FR_SDR_e"/>
    <property type="match status" value="1"/>
</dbReference>
<dbReference type="FunFam" id="3.40.50.720:FF:000085">
    <property type="entry name" value="Dihydroflavonol reductase"/>
    <property type="match status" value="1"/>
</dbReference>
<dbReference type="Gene3D" id="3.40.50.720">
    <property type="entry name" value="NAD(P)-binding Rossmann-like Domain"/>
    <property type="match status" value="1"/>
</dbReference>
<dbReference type="InterPro" id="IPR001509">
    <property type="entry name" value="Epimerase_deHydtase"/>
</dbReference>
<dbReference type="InterPro" id="IPR036291">
    <property type="entry name" value="NAD(P)-bd_dom_sf"/>
</dbReference>
<dbReference type="InterPro" id="IPR050425">
    <property type="entry name" value="NAD(P)_dehydrat-like"/>
</dbReference>
<dbReference type="PANTHER" id="PTHR10366">
    <property type="entry name" value="NAD DEPENDENT EPIMERASE/DEHYDRATASE"/>
    <property type="match status" value="1"/>
</dbReference>
<dbReference type="PANTHER" id="PTHR10366:SF564">
    <property type="entry name" value="STEROL-4-ALPHA-CARBOXYLATE 3-DEHYDROGENASE, DECARBOXYLATING"/>
    <property type="match status" value="1"/>
</dbReference>
<dbReference type="Pfam" id="PF01370">
    <property type="entry name" value="Epimerase"/>
    <property type="match status" value="1"/>
</dbReference>
<dbReference type="SUPFAM" id="SSF51735">
    <property type="entry name" value="NAD(P)-binding Rossmann-fold domains"/>
    <property type="match status" value="1"/>
</dbReference>
<accession>P51103</accession>
<proteinExistence type="evidence at transcript level"/>
<sequence length="364" mass="40726">MKEDSPPTVCVTGAAGFIGSWLVMRLLERGYIVRATVRNPGDMKKVKHLLELPKAETNLTLWKADLTQEGSFDEAIEGCHGVFHVATPMDFESKDPENEIIKPTIEGILSIIRSCAKAKTVKKLVYTSSAGTVNVQETQLPVYDESHWSDLDFIYSKKMTAWMYFVSKTLAEKAAMEAAKENNIDFVSIIPPLVVGPFINPTFPPSLITALSLINGAESHYSIIKQGQYVHLDDLCECHIFLYENPEAKGRYICSKQDATIHQLARMIKQKWPEYHVPTQFAGIDEELPTVSFSSKKLIDMGFKFKYDLEDMFKGAIDSCKEKGFLPYSTNEVKKGLFESSINGNVHGQKGNQKIGDEGVKLVN</sequence>
<name>DFRA_CALCH</name>
<evidence type="ECO:0000250" key="1">
    <source>
        <dbReference type="UniProtKB" id="A0A059TC02"/>
    </source>
</evidence>
<evidence type="ECO:0000250" key="2">
    <source>
        <dbReference type="UniProtKB" id="Q9XES5"/>
    </source>
</evidence>
<evidence type="ECO:0000305" key="3"/>
<gene>
    <name type="primary">F</name>
</gene>
<feature type="chain" id="PRO_0000215564" description="Dihydroflavonol 4-reductase">
    <location>
        <begin position="1"/>
        <end position="364"/>
    </location>
</feature>
<feature type="binding site" evidence="1">
    <location>
        <position position="45"/>
    </location>
    <ligand>
        <name>NADP(+)</name>
        <dbReference type="ChEBI" id="CHEBI:58349"/>
    </ligand>
</feature>
<feature type="binding site" evidence="1">
    <location>
        <position position="164"/>
    </location>
    <ligand>
        <name>NADP(+)</name>
        <dbReference type="ChEBI" id="CHEBI:58349"/>
    </ligand>
</feature>
<organism>
    <name type="scientific">Callistephus chinensis</name>
    <name type="common">China aster</name>
    <name type="synonym">Callistemma chinense</name>
    <dbReference type="NCBI Taxonomy" id="13379"/>
    <lineage>
        <taxon>Eukaryota</taxon>
        <taxon>Viridiplantae</taxon>
        <taxon>Streptophyta</taxon>
        <taxon>Embryophyta</taxon>
        <taxon>Tracheophyta</taxon>
        <taxon>Spermatophyta</taxon>
        <taxon>Magnoliopsida</taxon>
        <taxon>eudicotyledons</taxon>
        <taxon>Gunneridae</taxon>
        <taxon>Pentapetalae</taxon>
        <taxon>asterids</taxon>
        <taxon>campanulids</taxon>
        <taxon>Asterales</taxon>
        <taxon>Asteraceae</taxon>
        <taxon>Asteroideae</taxon>
        <taxon>Astereae</taxon>
        <taxon>Australasian lineages</taxon>
        <taxon>Asterinae</taxon>
        <taxon>Callistephus</taxon>
    </lineage>
</organism>
<keyword id="KW-0284">Flavonoid biosynthesis</keyword>
<keyword id="KW-0521">NADP</keyword>
<keyword id="KW-0560">Oxidoreductase</keyword>